<feature type="chain" id="PRO_0000386900" description="Ribosomal RNA small subunit methyltransferase H">
    <location>
        <begin position="1"/>
        <end position="305"/>
    </location>
</feature>
<feature type="binding site" evidence="1">
    <location>
        <begin position="30"/>
        <end position="32"/>
    </location>
    <ligand>
        <name>S-adenosyl-L-methionine</name>
        <dbReference type="ChEBI" id="CHEBI:59789"/>
    </ligand>
</feature>
<feature type="binding site" evidence="1">
    <location>
        <position position="49"/>
    </location>
    <ligand>
        <name>S-adenosyl-L-methionine</name>
        <dbReference type="ChEBI" id="CHEBI:59789"/>
    </ligand>
</feature>
<feature type="binding site" evidence="1">
    <location>
        <position position="74"/>
    </location>
    <ligand>
        <name>S-adenosyl-L-methionine</name>
        <dbReference type="ChEBI" id="CHEBI:59789"/>
    </ligand>
</feature>
<feature type="binding site" evidence="1">
    <location>
        <position position="96"/>
    </location>
    <ligand>
        <name>S-adenosyl-L-methionine</name>
        <dbReference type="ChEBI" id="CHEBI:59789"/>
    </ligand>
</feature>
<feature type="binding site" evidence="1">
    <location>
        <position position="103"/>
    </location>
    <ligand>
        <name>S-adenosyl-L-methionine</name>
        <dbReference type="ChEBI" id="CHEBI:59789"/>
    </ligand>
</feature>
<accession>A0Q5I5</accession>
<proteinExistence type="inferred from homology"/>
<name>RSMH_FRATN</name>
<protein>
    <recommendedName>
        <fullName evidence="1">Ribosomal RNA small subunit methyltransferase H</fullName>
        <ecNumber evidence="1">2.1.1.199</ecNumber>
    </recommendedName>
    <alternativeName>
        <fullName evidence="1">16S rRNA m(4)C1402 methyltransferase</fullName>
    </alternativeName>
    <alternativeName>
        <fullName evidence="1">rRNA (cytosine-N(4)-)-methyltransferase RsmH</fullName>
    </alternativeName>
</protein>
<dbReference type="EC" id="2.1.1.199" evidence="1"/>
<dbReference type="EMBL" id="CP000439">
    <property type="protein sequence ID" value="ABK89500.1"/>
    <property type="molecule type" value="Genomic_DNA"/>
</dbReference>
<dbReference type="RefSeq" id="WP_003035895.1">
    <property type="nucleotide sequence ID" value="NZ_CP009633.1"/>
</dbReference>
<dbReference type="SMR" id="A0Q5I5"/>
<dbReference type="GeneID" id="75263910"/>
<dbReference type="KEGG" id="ftn:FTN_0605"/>
<dbReference type="KEGG" id="ftx:AW25_1423"/>
<dbReference type="BioCyc" id="FTUL401614:G1G75-630-MONOMER"/>
<dbReference type="Proteomes" id="UP000000762">
    <property type="component" value="Chromosome"/>
</dbReference>
<dbReference type="GO" id="GO:0005737">
    <property type="term" value="C:cytoplasm"/>
    <property type="evidence" value="ECO:0007669"/>
    <property type="project" value="UniProtKB-SubCell"/>
</dbReference>
<dbReference type="GO" id="GO:0071424">
    <property type="term" value="F:rRNA (cytosine-N4-)-methyltransferase activity"/>
    <property type="evidence" value="ECO:0007669"/>
    <property type="project" value="UniProtKB-UniRule"/>
</dbReference>
<dbReference type="GO" id="GO:0070475">
    <property type="term" value="P:rRNA base methylation"/>
    <property type="evidence" value="ECO:0007669"/>
    <property type="project" value="UniProtKB-UniRule"/>
</dbReference>
<dbReference type="Gene3D" id="1.10.150.170">
    <property type="entry name" value="Putative methyltransferase TM0872, insert domain"/>
    <property type="match status" value="1"/>
</dbReference>
<dbReference type="Gene3D" id="3.40.50.150">
    <property type="entry name" value="Vaccinia Virus protein VP39"/>
    <property type="match status" value="1"/>
</dbReference>
<dbReference type="HAMAP" id="MF_01007">
    <property type="entry name" value="16SrRNA_methyltr_H"/>
    <property type="match status" value="1"/>
</dbReference>
<dbReference type="InterPro" id="IPR002903">
    <property type="entry name" value="RsmH"/>
</dbReference>
<dbReference type="InterPro" id="IPR023397">
    <property type="entry name" value="SAM-dep_MeTrfase_MraW_recog"/>
</dbReference>
<dbReference type="InterPro" id="IPR029063">
    <property type="entry name" value="SAM-dependent_MTases_sf"/>
</dbReference>
<dbReference type="NCBIfam" id="TIGR00006">
    <property type="entry name" value="16S rRNA (cytosine(1402)-N(4))-methyltransferase RsmH"/>
    <property type="match status" value="1"/>
</dbReference>
<dbReference type="PANTHER" id="PTHR11265:SF0">
    <property type="entry name" value="12S RRNA N4-METHYLCYTIDINE METHYLTRANSFERASE"/>
    <property type="match status" value="1"/>
</dbReference>
<dbReference type="PANTHER" id="PTHR11265">
    <property type="entry name" value="S-ADENOSYL-METHYLTRANSFERASE MRAW"/>
    <property type="match status" value="1"/>
</dbReference>
<dbReference type="Pfam" id="PF01795">
    <property type="entry name" value="Methyltransf_5"/>
    <property type="match status" value="1"/>
</dbReference>
<dbReference type="PIRSF" id="PIRSF004486">
    <property type="entry name" value="MraW"/>
    <property type="match status" value="1"/>
</dbReference>
<dbReference type="SUPFAM" id="SSF81799">
    <property type="entry name" value="Putative methyltransferase TM0872, insert domain"/>
    <property type="match status" value="1"/>
</dbReference>
<dbReference type="SUPFAM" id="SSF53335">
    <property type="entry name" value="S-adenosyl-L-methionine-dependent methyltransferases"/>
    <property type="match status" value="1"/>
</dbReference>
<gene>
    <name evidence="1" type="primary">rsmH</name>
    <name type="synonym">mraW</name>
    <name type="ordered locus">FTN_0605</name>
</gene>
<sequence>MHYSVLLQESINDLNINPQGIYIDATFGRGGHSKAILNRLTTGRLIAFDKDLDAISYARENFQFSNFEIVHASFASIYDYCLQHSLLGKIDGIIMDLGVSSPQLDNAARGFSFTHNGPLDMRMDVSKGITASQALEELSVDDLSYIFKVYGEERFARKIALRIKDYIQQNGSISTTLELAELIRATIGKKEKKNPATRCFQALRIYVNNELKDLEALLENILAVIKSGGRIAAISFHSLEDRIVKQKFSALINPKQELNRITKMLPQDSSQIKLKWITKKSKANEDELNQNVRSRSAILRVVEKL</sequence>
<organism>
    <name type="scientific">Francisella tularensis subsp. novicida (strain U112)</name>
    <dbReference type="NCBI Taxonomy" id="401614"/>
    <lineage>
        <taxon>Bacteria</taxon>
        <taxon>Pseudomonadati</taxon>
        <taxon>Pseudomonadota</taxon>
        <taxon>Gammaproteobacteria</taxon>
        <taxon>Thiotrichales</taxon>
        <taxon>Francisellaceae</taxon>
        <taxon>Francisella</taxon>
    </lineage>
</organism>
<reference key="1">
    <citation type="journal article" date="2007" name="Genome Biol.">
        <title>Comparison of Francisella tularensis genomes reveals evolutionary events associated with the emergence of human pathogenic strains.</title>
        <authorList>
            <person name="Rohmer L."/>
            <person name="Fong C."/>
            <person name="Abmayr S."/>
            <person name="Wasnick M."/>
            <person name="Larson Freeman T.J."/>
            <person name="Radey M."/>
            <person name="Guina T."/>
            <person name="Svensson K."/>
            <person name="Hayden H.S."/>
            <person name="Jacobs M."/>
            <person name="Gallagher L.A."/>
            <person name="Manoil C."/>
            <person name="Ernst R.K."/>
            <person name="Drees B."/>
            <person name="Buckley D."/>
            <person name="Haugen E."/>
            <person name="Bovee D."/>
            <person name="Zhou Y."/>
            <person name="Chang J."/>
            <person name="Levy R."/>
            <person name="Lim R."/>
            <person name="Gillett W."/>
            <person name="Guenthener D."/>
            <person name="Kang A."/>
            <person name="Shaffer S.A."/>
            <person name="Taylor G."/>
            <person name="Chen J."/>
            <person name="Gallis B."/>
            <person name="D'Argenio D.A."/>
            <person name="Forsman M."/>
            <person name="Olson M.V."/>
            <person name="Goodlett D.R."/>
            <person name="Kaul R."/>
            <person name="Miller S.I."/>
            <person name="Brittnacher M.J."/>
        </authorList>
    </citation>
    <scope>NUCLEOTIDE SEQUENCE [LARGE SCALE GENOMIC DNA]</scope>
    <source>
        <strain>U112</strain>
    </source>
</reference>
<evidence type="ECO:0000255" key="1">
    <source>
        <dbReference type="HAMAP-Rule" id="MF_01007"/>
    </source>
</evidence>
<keyword id="KW-0963">Cytoplasm</keyword>
<keyword id="KW-0489">Methyltransferase</keyword>
<keyword id="KW-0698">rRNA processing</keyword>
<keyword id="KW-0949">S-adenosyl-L-methionine</keyword>
<keyword id="KW-0808">Transferase</keyword>
<comment type="function">
    <text evidence="1">Specifically methylates the N4 position of cytidine in position 1402 (C1402) of 16S rRNA.</text>
</comment>
<comment type="catalytic activity">
    <reaction evidence="1">
        <text>cytidine(1402) in 16S rRNA + S-adenosyl-L-methionine = N(4)-methylcytidine(1402) in 16S rRNA + S-adenosyl-L-homocysteine + H(+)</text>
        <dbReference type="Rhea" id="RHEA:42928"/>
        <dbReference type="Rhea" id="RHEA-COMP:10286"/>
        <dbReference type="Rhea" id="RHEA-COMP:10287"/>
        <dbReference type="ChEBI" id="CHEBI:15378"/>
        <dbReference type="ChEBI" id="CHEBI:57856"/>
        <dbReference type="ChEBI" id="CHEBI:59789"/>
        <dbReference type="ChEBI" id="CHEBI:74506"/>
        <dbReference type="ChEBI" id="CHEBI:82748"/>
        <dbReference type="EC" id="2.1.1.199"/>
    </reaction>
</comment>
<comment type="subcellular location">
    <subcellularLocation>
        <location evidence="1">Cytoplasm</location>
    </subcellularLocation>
</comment>
<comment type="similarity">
    <text evidence="1">Belongs to the methyltransferase superfamily. RsmH family.</text>
</comment>